<organism>
    <name type="scientific">Teredinibacter turnerae (strain ATCC 39867 / T7901)</name>
    <dbReference type="NCBI Taxonomy" id="377629"/>
    <lineage>
        <taxon>Bacteria</taxon>
        <taxon>Pseudomonadati</taxon>
        <taxon>Pseudomonadota</taxon>
        <taxon>Gammaproteobacteria</taxon>
        <taxon>Cellvibrionales</taxon>
        <taxon>Cellvibrionaceae</taxon>
        <taxon>Teredinibacter</taxon>
    </lineage>
</organism>
<comment type="function">
    <text evidence="1">Binds directly to 23S rRNA. The L1 stalk is quite mobile in the ribosome, and is involved in E site tRNA release.</text>
</comment>
<comment type="function">
    <text evidence="1">Protein L1 is also a translational repressor protein, it controls the translation of the L11 operon by binding to its mRNA.</text>
</comment>
<comment type="subunit">
    <text evidence="1">Part of the 50S ribosomal subunit.</text>
</comment>
<comment type="similarity">
    <text evidence="1">Belongs to the universal ribosomal protein uL1 family.</text>
</comment>
<proteinExistence type="inferred from homology"/>
<evidence type="ECO:0000255" key="1">
    <source>
        <dbReference type="HAMAP-Rule" id="MF_01318"/>
    </source>
</evidence>
<evidence type="ECO:0000305" key="2"/>
<accession>C5BPQ3</accession>
<name>RL1_TERTT</name>
<feature type="chain" id="PRO_1000214434" description="Large ribosomal subunit protein uL1">
    <location>
        <begin position="1"/>
        <end position="231"/>
    </location>
</feature>
<gene>
    <name evidence="1" type="primary">rplA</name>
    <name type="ordered locus">TERTU_0879</name>
</gene>
<dbReference type="EMBL" id="CP001614">
    <property type="protein sequence ID" value="ACR11005.1"/>
    <property type="molecule type" value="Genomic_DNA"/>
</dbReference>
<dbReference type="RefSeq" id="WP_015817117.1">
    <property type="nucleotide sequence ID" value="NC_012997.1"/>
</dbReference>
<dbReference type="SMR" id="C5BPQ3"/>
<dbReference type="STRING" id="377629.TERTU_0879"/>
<dbReference type="KEGG" id="ttu:TERTU_0879"/>
<dbReference type="eggNOG" id="COG0081">
    <property type="taxonomic scope" value="Bacteria"/>
</dbReference>
<dbReference type="HOGENOM" id="CLU_062853_0_0_6"/>
<dbReference type="OrthoDB" id="9803740at2"/>
<dbReference type="Proteomes" id="UP000009080">
    <property type="component" value="Chromosome"/>
</dbReference>
<dbReference type="GO" id="GO:0022625">
    <property type="term" value="C:cytosolic large ribosomal subunit"/>
    <property type="evidence" value="ECO:0007669"/>
    <property type="project" value="TreeGrafter"/>
</dbReference>
<dbReference type="GO" id="GO:0019843">
    <property type="term" value="F:rRNA binding"/>
    <property type="evidence" value="ECO:0007669"/>
    <property type="project" value="UniProtKB-UniRule"/>
</dbReference>
<dbReference type="GO" id="GO:0003735">
    <property type="term" value="F:structural constituent of ribosome"/>
    <property type="evidence" value="ECO:0007669"/>
    <property type="project" value="InterPro"/>
</dbReference>
<dbReference type="GO" id="GO:0000049">
    <property type="term" value="F:tRNA binding"/>
    <property type="evidence" value="ECO:0007669"/>
    <property type="project" value="UniProtKB-KW"/>
</dbReference>
<dbReference type="GO" id="GO:0006417">
    <property type="term" value="P:regulation of translation"/>
    <property type="evidence" value="ECO:0007669"/>
    <property type="project" value="UniProtKB-KW"/>
</dbReference>
<dbReference type="GO" id="GO:0006412">
    <property type="term" value="P:translation"/>
    <property type="evidence" value="ECO:0007669"/>
    <property type="project" value="UniProtKB-UniRule"/>
</dbReference>
<dbReference type="CDD" id="cd00403">
    <property type="entry name" value="Ribosomal_L1"/>
    <property type="match status" value="1"/>
</dbReference>
<dbReference type="FunFam" id="3.40.50.790:FF:000001">
    <property type="entry name" value="50S ribosomal protein L1"/>
    <property type="match status" value="1"/>
</dbReference>
<dbReference type="Gene3D" id="3.30.190.20">
    <property type="match status" value="1"/>
</dbReference>
<dbReference type="Gene3D" id="3.40.50.790">
    <property type="match status" value="1"/>
</dbReference>
<dbReference type="HAMAP" id="MF_01318_B">
    <property type="entry name" value="Ribosomal_uL1_B"/>
    <property type="match status" value="1"/>
</dbReference>
<dbReference type="InterPro" id="IPR005878">
    <property type="entry name" value="Ribosom_uL1_bac-type"/>
</dbReference>
<dbReference type="InterPro" id="IPR002143">
    <property type="entry name" value="Ribosomal_uL1"/>
</dbReference>
<dbReference type="InterPro" id="IPR023674">
    <property type="entry name" value="Ribosomal_uL1-like"/>
</dbReference>
<dbReference type="InterPro" id="IPR028364">
    <property type="entry name" value="Ribosomal_uL1/biogenesis"/>
</dbReference>
<dbReference type="InterPro" id="IPR016095">
    <property type="entry name" value="Ribosomal_uL1_3-a/b-sand"/>
</dbReference>
<dbReference type="InterPro" id="IPR023673">
    <property type="entry name" value="Ribosomal_uL1_CS"/>
</dbReference>
<dbReference type="NCBIfam" id="TIGR01169">
    <property type="entry name" value="rplA_bact"/>
    <property type="match status" value="1"/>
</dbReference>
<dbReference type="PANTHER" id="PTHR36427">
    <property type="entry name" value="54S RIBOSOMAL PROTEIN L1, MITOCHONDRIAL"/>
    <property type="match status" value="1"/>
</dbReference>
<dbReference type="PANTHER" id="PTHR36427:SF3">
    <property type="entry name" value="LARGE RIBOSOMAL SUBUNIT PROTEIN UL1M"/>
    <property type="match status" value="1"/>
</dbReference>
<dbReference type="Pfam" id="PF00687">
    <property type="entry name" value="Ribosomal_L1"/>
    <property type="match status" value="1"/>
</dbReference>
<dbReference type="PIRSF" id="PIRSF002155">
    <property type="entry name" value="Ribosomal_L1"/>
    <property type="match status" value="1"/>
</dbReference>
<dbReference type="SUPFAM" id="SSF56808">
    <property type="entry name" value="Ribosomal protein L1"/>
    <property type="match status" value="1"/>
</dbReference>
<dbReference type="PROSITE" id="PS01199">
    <property type="entry name" value="RIBOSOMAL_L1"/>
    <property type="match status" value="1"/>
</dbReference>
<reference key="1">
    <citation type="journal article" date="2009" name="PLoS ONE">
        <title>The complete genome of Teredinibacter turnerae T7901: an intracellular endosymbiont of marine wood-boring bivalves (shipworms).</title>
        <authorList>
            <person name="Yang J.C."/>
            <person name="Madupu R."/>
            <person name="Durkin A.S."/>
            <person name="Ekborg N.A."/>
            <person name="Pedamallu C.S."/>
            <person name="Hostetler J.B."/>
            <person name="Radune D."/>
            <person name="Toms B.S."/>
            <person name="Henrissat B."/>
            <person name="Coutinho P.M."/>
            <person name="Schwarz S."/>
            <person name="Field L."/>
            <person name="Trindade-Silva A.E."/>
            <person name="Soares C.A.G."/>
            <person name="Elshahawi S."/>
            <person name="Hanora A."/>
            <person name="Schmidt E.W."/>
            <person name="Haygood M.G."/>
            <person name="Posfai J."/>
            <person name="Benner J."/>
            <person name="Madinger C."/>
            <person name="Nove J."/>
            <person name="Anton B."/>
            <person name="Chaudhary K."/>
            <person name="Foster J."/>
            <person name="Holman A."/>
            <person name="Kumar S."/>
            <person name="Lessard P.A."/>
            <person name="Luyten Y.A."/>
            <person name="Slatko B."/>
            <person name="Wood N."/>
            <person name="Wu B."/>
            <person name="Teplitski M."/>
            <person name="Mougous J.D."/>
            <person name="Ward N."/>
            <person name="Eisen J.A."/>
            <person name="Badger J.H."/>
            <person name="Distel D.L."/>
        </authorList>
    </citation>
    <scope>NUCLEOTIDE SEQUENCE [LARGE SCALE GENOMIC DNA]</scope>
    <source>
        <strain>ATCC 39867 / T7901</strain>
    </source>
</reference>
<protein>
    <recommendedName>
        <fullName evidence="1">Large ribosomal subunit protein uL1</fullName>
    </recommendedName>
    <alternativeName>
        <fullName evidence="2">50S ribosomal protein L1</fullName>
    </alternativeName>
</protein>
<sequence length="231" mass="24052">MAKLTKRQKAINEKVDFNKAYGIDEAVALLKELSTVKFPETVDAAINLGIDPRKSDQAVRGATSLPHGTGKDVRVAVFTQGAAADAAKEAGAEFVGMEDLADQIKGGMMDFDVVIADPAAMRVVGALGQILGPRGLMPNPKTGTVTPDVAGAVKNAKAGQVRFRADKGGVIHGGIGKVSFELNAIKENLEALVSDLKKAKPAAAKGVYLKKISLSTTMGPGLTIDQSSLEI</sequence>
<keyword id="KW-1185">Reference proteome</keyword>
<keyword id="KW-0678">Repressor</keyword>
<keyword id="KW-0687">Ribonucleoprotein</keyword>
<keyword id="KW-0689">Ribosomal protein</keyword>
<keyword id="KW-0694">RNA-binding</keyword>
<keyword id="KW-0699">rRNA-binding</keyword>
<keyword id="KW-0810">Translation regulation</keyword>
<keyword id="KW-0820">tRNA-binding</keyword>